<name>GNA14_HUMAN</name>
<protein>
    <recommendedName>
        <fullName>Guanine nucleotide-binding protein subunit alpha-14</fullName>
        <shortName>G alpha-14</shortName>
        <shortName>G-protein subunit alpha-14</shortName>
    </recommendedName>
</protein>
<keyword id="KW-0013">ADP-ribosylation</keyword>
<keyword id="KW-0342">GTP-binding</keyword>
<keyword id="KW-0460">Magnesium</keyword>
<keyword id="KW-0479">Metal-binding</keyword>
<keyword id="KW-0547">Nucleotide-binding</keyword>
<keyword id="KW-1267">Proteomics identification</keyword>
<keyword id="KW-1185">Reference proteome</keyword>
<keyword id="KW-0807">Transducer</keyword>
<dbReference type="EMBL" id="AF105201">
    <property type="protein sequence ID" value="AAD17944.1"/>
    <property type="molecule type" value="mRNA"/>
</dbReference>
<dbReference type="EMBL" id="AF493903">
    <property type="protein sequence ID" value="AAM12617.1"/>
    <property type="molecule type" value="mRNA"/>
</dbReference>
<dbReference type="EMBL" id="AK312460">
    <property type="protein sequence ID" value="BAG35367.1"/>
    <property type="molecule type" value="mRNA"/>
</dbReference>
<dbReference type="EMBL" id="CH471089">
    <property type="protein sequence ID" value="EAW62603.1"/>
    <property type="molecule type" value="Genomic_DNA"/>
</dbReference>
<dbReference type="EMBL" id="BC027886">
    <property type="protein sequence ID" value="AAH27886.1"/>
    <property type="molecule type" value="mRNA"/>
</dbReference>
<dbReference type="CCDS" id="CCDS6657.1"/>
<dbReference type="RefSeq" id="NP_004288.1">
    <property type="nucleotide sequence ID" value="NM_004297.4"/>
</dbReference>
<dbReference type="SMR" id="O95837"/>
<dbReference type="BioGRID" id="114989">
    <property type="interactions" value="11"/>
</dbReference>
<dbReference type="CORUM" id="O95837"/>
<dbReference type="FunCoup" id="O95837">
    <property type="interactions" value="433"/>
</dbReference>
<dbReference type="IntAct" id="O95837">
    <property type="interactions" value="11"/>
</dbReference>
<dbReference type="MINT" id="O95837"/>
<dbReference type="STRING" id="9606.ENSP00000365807"/>
<dbReference type="iPTMnet" id="O95837"/>
<dbReference type="PhosphoSitePlus" id="O95837"/>
<dbReference type="SwissPalm" id="O95837"/>
<dbReference type="BioMuta" id="GNA14"/>
<dbReference type="jPOST" id="O95837"/>
<dbReference type="MassIVE" id="O95837"/>
<dbReference type="PaxDb" id="9606-ENSP00000365807"/>
<dbReference type="PeptideAtlas" id="O95837"/>
<dbReference type="ProteomicsDB" id="51083"/>
<dbReference type="Antibodypedia" id="54425">
    <property type="antibodies" value="237 antibodies from 28 providers"/>
</dbReference>
<dbReference type="DNASU" id="9630"/>
<dbReference type="Ensembl" id="ENST00000341700.7">
    <property type="protein sequence ID" value="ENSP00000365807.4"/>
    <property type="gene ID" value="ENSG00000156049.7"/>
</dbReference>
<dbReference type="GeneID" id="9630"/>
<dbReference type="KEGG" id="hsa:9630"/>
<dbReference type="MANE-Select" id="ENST00000341700.7">
    <property type="protein sequence ID" value="ENSP00000365807.4"/>
    <property type="RefSeq nucleotide sequence ID" value="NM_004297.4"/>
    <property type="RefSeq protein sequence ID" value="NP_004288.1"/>
</dbReference>
<dbReference type="UCSC" id="uc004aku.4">
    <property type="organism name" value="human"/>
</dbReference>
<dbReference type="AGR" id="HGNC:4382"/>
<dbReference type="CTD" id="9630"/>
<dbReference type="DisGeNET" id="9630"/>
<dbReference type="GeneCards" id="GNA14"/>
<dbReference type="HGNC" id="HGNC:4382">
    <property type="gene designation" value="GNA14"/>
</dbReference>
<dbReference type="HPA" id="ENSG00000156049">
    <property type="expression patterns" value="Low tissue specificity"/>
</dbReference>
<dbReference type="MalaCards" id="GNA14"/>
<dbReference type="MIM" id="604397">
    <property type="type" value="gene"/>
</dbReference>
<dbReference type="neXtProt" id="NX_O95837"/>
<dbReference type="OpenTargets" id="ENSG00000156049"/>
<dbReference type="Orphanet" id="675359">
    <property type="disease" value="Anastomosing haemangioma"/>
</dbReference>
<dbReference type="Orphanet" id="2122">
    <property type="disease" value="Kaposiform hemangioendothelioma"/>
</dbReference>
<dbReference type="Orphanet" id="1063">
    <property type="disease" value="Tufted angioma"/>
</dbReference>
<dbReference type="PharmGKB" id="PA28767"/>
<dbReference type="VEuPathDB" id="HostDB:ENSG00000156049"/>
<dbReference type="eggNOG" id="KOG0085">
    <property type="taxonomic scope" value="Eukaryota"/>
</dbReference>
<dbReference type="GeneTree" id="ENSGT00940000158510"/>
<dbReference type="HOGENOM" id="CLU_014184_6_0_1"/>
<dbReference type="InParanoid" id="O95837"/>
<dbReference type="OMA" id="LRIHYVC"/>
<dbReference type="OrthoDB" id="5817230at2759"/>
<dbReference type="PAN-GO" id="O95837">
    <property type="GO annotations" value="7 GO annotations based on evolutionary models"/>
</dbReference>
<dbReference type="PhylomeDB" id="O95837"/>
<dbReference type="TreeFam" id="TF300673"/>
<dbReference type="PathwayCommons" id="O95837"/>
<dbReference type="Reactome" id="R-HSA-112043">
    <property type="pathway name" value="PLC beta mediated events"/>
</dbReference>
<dbReference type="Reactome" id="R-HSA-202040">
    <property type="pathway name" value="G-protein activation"/>
</dbReference>
<dbReference type="Reactome" id="R-HSA-399997">
    <property type="pathway name" value="Acetylcholine regulates insulin secretion"/>
</dbReference>
<dbReference type="Reactome" id="R-HSA-416476">
    <property type="pathway name" value="G alpha (q) signalling events"/>
</dbReference>
<dbReference type="Reactome" id="R-HSA-418592">
    <property type="pathway name" value="ADP signalling through P2Y purinoceptor 1"/>
</dbReference>
<dbReference type="Reactome" id="R-HSA-428930">
    <property type="pathway name" value="Thromboxane signalling through TP receptor"/>
</dbReference>
<dbReference type="Reactome" id="R-HSA-434316">
    <property type="pathway name" value="Fatty Acids bound to GPR40 (FFAR1) regulate insulin secretion"/>
</dbReference>
<dbReference type="Reactome" id="R-HSA-456926">
    <property type="pathway name" value="Thrombin signalling through proteinase activated receptors (PARs)"/>
</dbReference>
<dbReference type="Reactome" id="R-HSA-6814122">
    <property type="pathway name" value="Cooperation of PDCL (PhLP1) and TRiC/CCT in G-protein beta folding"/>
</dbReference>
<dbReference type="SignaLink" id="O95837"/>
<dbReference type="SIGNOR" id="O95837"/>
<dbReference type="BioGRID-ORCS" id="9630">
    <property type="hits" value="18 hits in 1147 CRISPR screens"/>
</dbReference>
<dbReference type="CD-CODE" id="FB4E32DD">
    <property type="entry name" value="Presynaptic clusters and postsynaptic densities"/>
</dbReference>
<dbReference type="ChiTaRS" id="GNA14">
    <property type="organism name" value="human"/>
</dbReference>
<dbReference type="GenomeRNAi" id="9630"/>
<dbReference type="Pharos" id="O95837">
    <property type="development level" value="Tbio"/>
</dbReference>
<dbReference type="PRO" id="PR:O95837"/>
<dbReference type="Proteomes" id="UP000005640">
    <property type="component" value="Chromosome 9"/>
</dbReference>
<dbReference type="RNAct" id="O95837">
    <property type="molecule type" value="protein"/>
</dbReference>
<dbReference type="Bgee" id="ENSG00000156049">
    <property type="expression patterns" value="Expressed in secondary oocyte and 132 other cell types or tissues"/>
</dbReference>
<dbReference type="GO" id="GO:0005737">
    <property type="term" value="C:cytoplasm"/>
    <property type="evidence" value="ECO:0000318"/>
    <property type="project" value="GO_Central"/>
</dbReference>
<dbReference type="GO" id="GO:0070062">
    <property type="term" value="C:extracellular exosome"/>
    <property type="evidence" value="ECO:0007005"/>
    <property type="project" value="UniProtKB"/>
</dbReference>
<dbReference type="GO" id="GO:0005834">
    <property type="term" value="C:heterotrimeric G-protein complex"/>
    <property type="evidence" value="ECO:0000318"/>
    <property type="project" value="GO_Central"/>
</dbReference>
<dbReference type="GO" id="GO:0005886">
    <property type="term" value="C:plasma membrane"/>
    <property type="evidence" value="ECO:0000304"/>
    <property type="project" value="Reactome"/>
</dbReference>
<dbReference type="GO" id="GO:0001664">
    <property type="term" value="F:G protein-coupled receptor binding"/>
    <property type="evidence" value="ECO:0000318"/>
    <property type="project" value="GO_Central"/>
</dbReference>
<dbReference type="GO" id="GO:0031683">
    <property type="term" value="F:G-protein beta/gamma-subunit complex binding"/>
    <property type="evidence" value="ECO:0000318"/>
    <property type="project" value="GO_Central"/>
</dbReference>
<dbReference type="GO" id="GO:0005525">
    <property type="term" value="F:GTP binding"/>
    <property type="evidence" value="ECO:0000304"/>
    <property type="project" value="Reactome"/>
</dbReference>
<dbReference type="GO" id="GO:0003924">
    <property type="term" value="F:GTPase activity"/>
    <property type="evidence" value="ECO:0000318"/>
    <property type="project" value="GO_Central"/>
</dbReference>
<dbReference type="GO" id="GO:0046872">
    <property type="term" value="F:metal ion binding"/>
    <property type="evidence" value="ECO:0007669"/>
    <property type="project" value="UniProtKB-KW"/>
</dbReference>
<dbReference type="GO" id="GO:0001508">
    <property type="term" value="P:action potential"/>
    <property type="evidence" value="ECO:0000318"/>
    <property type="project" value="GO_Central"/>
</dbReference>
<dbReference type="GO" id="GO:0007188">
    <property type="term" value="P:adenylate cyclase-modulating G protein-coupled receptor signaling pathway"/>
    <property type="evidence" value="ECO:0000318"/>
    <property type="project" value="GO_Central"/>
</dbReference>
<dbReference type="GO" id="GO:0060158">
    <property type="term" value="P:phospholipase C-activating dopamine receptor signaling pathway"/>
    <property type="evidence" value="ECO:0000318"/>
    <property type="project" value="GO_Central"/>
</dbReference>
<dbReference type="GO" id="GO:0007165">
    <property type="term" value="P:signal transduction"/>
    <property type="evidence" value="ECO:0000304"/>
    <property type="project" value="ProtInc"/>
</dbReference>
<dbReference type="CDD" id="cd00066">
    <property type="entry name" value="G-alpha"/>
    <property type="match status" value="1"/>
</dbReference>
<dbReference type="FunFam" id="3.40.50.300:FF:003977">
    <property type="entry name" value="Guanine nucleotide-binding protein G(q) subunit alpha"/>
    <property type="match status" value="1"/>
</dbReference>
<dbReference type="FunFam" id="1.10.400.10:FF:000002">
    <property type="entry name" value="guanine nucleotide-binding protein G(Q) subunit alpha"/>
    <property type="match status" value="1"/>
</dbReference>
<dbReference type="FunFam" id="3.40.50.300:FF:000692">
    <property type="entry name" value="Guanine nucleotide-binding protein subunit alpha"/>
    <property type="match status" value="1"/>
</dbReference>
<dbReference type="Gene3D" id="1.10.400.10">
    <property type="entry name" value="GI Alpha 1, domain 2-like"/>
    <property type="match status" value="1"/>
</dbReference>
<dbReference type="Gene3D" id="3.40.50.300">
    <property type="entry name" value="P-loop containing nucleotide triphosphate hydrolases"/>
    <property type="match status" value="1"/>
</dbReference>
<dbReference type="InterPro" id="IPR000654">
    <property type="entry name" value="Gprotein_alpha_Q"/>
</dbReference>
<dbReference type="InterPro" id="IPR001019">
    <property type="entry name" value="Gprotein_alpha_su"/>
</dbReference>
<dbReference type="InterPro" id="IPR011025">
    <property type="entry name" value="GproteinA_insert"/>
</dbReference>
<dbReference type="InterPro" id="IPR027417">
    <property type="entry name" value="P-loop_NTPase"/>
</dbReference>
<dbReference type="PANTHER" id="PTHR10218">
    <property type="entry name" value="GTP-BINDING PROTEIN ALPHA SUBUNIT"/>
    <property type="match status" value="1"/>
</dbReference>
<dbReference type="PANTHER" id="PTHR10218:SF213">
    <property type="entry name" value="GUANINE NUCLEOTIDE-BINDING PROTEIN SUBUNIT ALPHA-14"/>
    <property type="match status" value="1"/>
</dbReference>
<dbReference type="Pfam" id="PF00503">
    <property type="entry name" value="G-alpha"/>
    <property type="match status" value="1"/>
</dbReference>
<dbReference type="PRINTS" id="PR00318">
    <property type="entry name" value="GPROTEINA"/>
</dbReference>
<dbReference type="PRINTS" id="PR00442">
    <property type="entry name" value="GPROTEINAQ"/>
</dbReference>
<dbReference type="SMART" id="SM00275">
    <property type="entry name" value="G_alpha"/>
    <property type="match status" value="1"/>
</dbReference>
<dbReference type="SUPFAM" id="SSF52540">
    <property type="entry name" value="P-loop containing nucleoside triphosphate hydrolases"/>
    <property type="match status" value="1"/>
</dbReference>
<dbReference type="SUPFAM" id="SSF47895">
    <property type="entry name" value="Transducin (alpha subunit), insertion domain"/>
    <property type="match status" value="1"/>
</dbReference>
<dbReference type="PROSITE" id="PS51882">
    <property type="entry name" value="G_ALPHA"/>
    <property type="match status" value="1"/>
</dbReference>
<gene>
    <name type="primary">GNA14</name>
</gene>
<sequence>MAGCCCLSAEEKESQRISAEIERQLRRDKKDARRELKLLLLGTGESGKSTFIKQMRIIHGSGYSDEDRKGFTKLVYQNIFTAMQAMIRAMDTLRIQYVCEQNKENAQIIREVEVDKVSMLSREQVEAIKQLWQDPGIQECYDRRREYQLSDSAKYYLTDIDRIATPSFVPTQQDVLRVRVPTTGIIEYPFDLENIIFRMVDVGGQRSERRKWIHCFESVTSIIFLVALSEYDQVLAECDNENRMEESKALFKTIITYPWFLNSSVILFLNKKDLLEEKIMYSHLISYFPEYTGPKQDVRAARDFILKLYQDQNPDKEKVIYSHFTCATDTDNIRFVFAAVKDTILQLNLREFNLV</sequence>
<reference key="1">
    <citation type="journal article" date="1999" name="Genomics">
        <title>Genomic organization of the human G-alpha-14 and G-alpha-Q genes and mutation analysis in chorea-acanthocytosis (CHAC).</title>
        <authorList>
            <person name="Rubio J.P."/>
            <person name="Levy E.R."/>
            <person name="Dobson-Stone C."/>
            <person name="Monaco A.P."/>
        </authorList>
    </citation>
    <scope>NUCLEOTIDE SEQUENCE [MRNA]</scope>
</reference>
<reference key="2">
    <citation type="submission" date="2002-03" db="EMBL/GenBank/DDBJ databases">
        <title>cDNA clones of human proteins involved in signal transduction sequenced by the Guthrie cDNA resource center (www.cdna.org).</title>
        <authorList>
            <person name="Puhl H.L. III"/>
            <person name="Ikeda S.R."/>
            <person name="Aronstam R.S."/>
        </authorList>
    </citation>
    <scope>NUCLEOTIDE SEQUENCE [LARGE SCALE MRNA]</scope>
</reference>
<reference key="3">
    <citation type="journal article" date="2004" name="Nat. Genet.">
        <title>Complete sequencing and characterization of 21,243 full-length human cDNAs.</title>
        <authorList>
            <person name="Ota T."/>
            <person name="Suzuki Y."/>
            <person name="Nishikawa T."/>
            <person name="Otsuki T."/>
            <person name="Sugiyama T."/>
            <person name="Irie R."/>
            <person name="Wakamatsu A."/>
            <person name="Hayashi K."/>
            <person name="Sato H."/>
            <person name="Nagai K."/>
            <person name="Kimura K."/>
            <person name="Makita H."/>
            <person name="Sekine M."/>
            <person name="Obayashi M."/>
            <person name="Nishi T."/>
            <person name="Shibahara T."/>
            <person name="Tanaka T."/>
            <person name="Ishii S."/>
            <person name="Yamamoto J."/>
            <person name="Saito K."/>
            <person name="Kawai Y."/>
            <person name="Isono Y."/>
            <person name="Nakamura Y."/>
            <person name="Nagahari K."/>
            <person name="Murakami K."/>
            <person name="Yasuda T."/>
            <person name="Iwayanagi T."/>
            <person name="Wagatsuma M."/>
            <person name="Shiratori A."/>
            <person name="Sudo H."/>
            <person name="Hosoiri T."/>
            <person name="Kaku Y."/>
            <person name="Kodaira H."/>
            <person name="Kondo H."/>
            <person name="Sugawara M."/>
            <person name="Takahashi M."/>
            <person name="Kanda K."/>
            <person name="Yokoi T."/>
            <person name="Furuya T."/>
            <person name="Kikkawa E."/>
            <person name="Omura Y."/>
            <person name="Abe K."/>
            <person name="Kamihara K."/>
            <person name="Katsuta N."/>
            <person name="Sato K."/>
            <person name="Tanikawa M."/>
            <person name="Yamazaki M."/>
            <person name="Ninomiya K."/>
            <person name="Ishibashi T."/>
            <person name="Yamashita H."/>
            <person name="Murakawa K."/>
            <person name="Fujimori K."/>
            <person name="Tanai H."/>
            <person name="Kimata M."/>
            <person name="Watanabe M."/>
            <person name="Hiraoka S."/>
            <person name="Chiba Y."/>
            <person name="Ishida S."/>
            <person name="Ono Y."/>
            <person name="Takiguchi S."/>
            <person name="Watanabe S."/>
            <person name="Yosida M."/>
            <person name="Hotuta T."/>
            <person name="Kusano J."/>
            <person name="Kanehori K."/>
            <person name="Takahashi-Fujii A."/>
            <person name="Hara H."/>
            <person name="Tanase T.-O."/>
            <person name="Nomura Y."/>
            <person name="Togiya S."/>
            <person name="Komai F."/>
            <person name="Hara R."/>
            <person name="Takeuchi K."/>
            <person name="Arita M."/>
            <person name="Imose N."/>
            <person name="Musashino K."/>
            <person name="Yuuki H."/>
            <person name="Oshima A."/>
            <person name="Sasaki N."/>
            <person name="Aotsuka S."/>
            <person name="Yoshikawa Y."/>
            <person name="Matsunawa H."/>
            <person name="Ichihara T."/>
            <person name="Shiohata N."/>
            <person name="Sano S."/>
            <person name="Moriya S."/>
            <person name="Momiyama H."/>
            <person name="Satoh N."/>
            <person name="Takami S."/>
            <person name="Terashima Y."/>
            <person name="Suzuki O."/>
            <person name="Nakagawa S."/>
            <person name="Senoh A."/>
            <person name="Mizoguchi H."/>
            <person name="Goto Y."/>
            <person name="Shimizu F."/>
            <person name="Wakebe H."/>
            <person name="Hishigaki H."/>
            <person name="Watanabe T."/>
            <person name="Sugiyama A."/>
            <person name="Takemoto M."/>
            <person name="Kawakami B."/>
            <person name="Yamazaki M."/>
            <person name="Watanabe K."/>
            <person name="Kumagai A."/>
            <person name="Itakura S."/>
            <person name="Fukuzumi Y."/>
            <person name="Fujimori Y."/>
            <person name="Komiyama M."/>
            <person name="Tashiro H."/>
            <person name="Tanigami A."/>
            <person name="Fujiwara T."/>
            <person name="Ono T."/>
            <person name="Yamada K."/>
            <person name="Fujii Y."/>
            <person name="Ozaki K."/>
            <person name="Hirao M."/>
            <person name="Ohmori Y."/>
            <person name="Kawabata A."/>
            <person name="Hikiji T."/>
            <person name="Kobatake N."/>
            <person name="Inagaki H."/>
            <person name="Ikema Y."/>
            <person name="Okamoto S."/>
            <person name="Okitani R."/>
            <person name="Kawakami T."/>
            <person name="Noguchi S."/>
            <person name="Itoh T."/>
            <person name="Shigeta K."/>
            <person name="Senba T."/>
            <person name="Matsumura K."/>
            <person name="Nakajima Y."/>
            <person name="Mizuno T."/>
            <person name="Morinaga M."/>
            <person name="Sasaki M."/>
            <person name="Togashi T."/>
            <person name="Oyama M."/>
            <person name="Hata H."/>
            <person name="Watanabe M."/>
            <person name="Komatsu T."/>
            <person name="Mizushima-Sugano J."/>
            <person name="Satoh T."/>
            <person name="Shirai Y."/>
            <person name="Takahashi Y."/>
            <person name="Nakagawa K."/>
            <person name="Okumura K."/>
            <person name="Nagase T."/>
            <person name="Nomura N."/>
            <person name="Kikuchi H."/>
            <person name="Masuho Y."/>
            <person name="Yamashita R."/>
            <person name="Nakai K."/>
            <person name="Yada T."/>
            <person name="Nakamura Y."/>
            <person name="Ohara O."/>
            <person name="Isogai T."/>
            <person name="Sugano S."/>
        </authorList>
    </citation>
    <scope>NUCLEOTIDE SEQUENCE [LARGE SCALE MRNA]</scope>
    <source>
        <tissue>Caudate nucleus</tissue>
    </source>
</reference>
<reference key="4">
    <citation type="submission" date="2005-07" db="EMBL/GenBank/DDBJ databases">
        <authorList>
            <person name="Mural R.J."/>
            <person name="Istrail S."/>
            <person name="Sutton G."/>
            <person name="Florea L."/>
            <person name="Halpern A.L."/>
            <person name="Mobarry C.M."/>
            <person name="Lippert R."/>
            <person name="Walenz B."/>
            <person name="Shatkay H."/>
            <person name="Dew I."/>
            <person name="Miller J.R."/>
            <person name="Flanigan M.J."/>
            <person name="Edwards N.J."/>
            <person name="Bolanos R."/>
            <person name="Fasulo D."/>
            <person name="Halldorsson B.V."/>
            <person name="Hannenhalli S."/>
            <person name="Turner R."/>
            <person name="Yooseph S."/>
            <person name="Lu F."/>
            <person name="Nusskern D.R."/>
            <person name="Shue B.C."/>
            <person name="Zheng X.H."/>
            <person name="Zhong F."/>
            <person name="Delcher A.L."/>
            <person name="Huson D.H."/>
            <person name="Kravitz S.A."/>
            <person name="Mouchard L."/>
            <person name="Reinert K."/>
            <person name="Remington K.A."/>
            <person name="Clark A.G."/>
            <person name="Waterman M.S."/>
            <person name="Eichler E.E."/>
            <person name="Adams M.D."/>
            <person name="Hunkapiller M.W."/>
            <person name="Myers E.W."/>
            <person name="Venter J.C."/>
        </authorList>
    </citation>
    <scope>NUCLEOTIDE SEQUENCE [LARGE SCALE GENOMIC DNA]</scope>
</reference>
<reference key="5">
    <citation type="journal article" date="2004" name="Genome Res.">
        <title>The status, quality, and expansion of the NIH full-length cDNA project: the Mammalian Gene Collection (MGC).</title>
        <authorList>
            <consortium name="The MGC Project Team"/>
        </authorList>
    </citation>
    <scope>NUCLEOTIDE SEQUENCE [LARGE SCALE MRNA]</scope>
    <source>
        <tissue>Pancreas</tissue>
        <tissue>Spleen</tissue>
    </source>
</reference>
<reference key="6">
    <citation type="journal article" date="2015" name="Proteomics">
        <title>N-terminome analysis of the human mitochondrial proteome.</title>
        <authorList>
            <person name="Vaca Jacome A.S."/>
            <person name="Rabilloud T."/>
            <person name="Schaeffer-Reiss C."/>
            <person name="Rompais M."/>
            <person name="Ayoub D."/>
            <person name="Lane L."/>
            <person name="Bairoch A."/>
            <person name="Van Dorsselaer A."/>
            <person name="Carapito C."/>
        </authorList>
    </citation>
    <scope>IDENTIFICATION BY MASS SPECTROMETRY [LARGE SCALE ANALYSIS]</scope>
</reference>
<comment type="function">
    <text>Guanine nucleotide-binding proteins (G proteins) are involved as modulators or transducers in various transmembrane signaling systems.</text>
</comment>
<comment type="subunit">
    <text>G proteins are composed of 3 units; alpha, beta and gamma. The alpha chain contains the guanine nucleotide binding site.</text>
</comment>
<comment type="interaction">
    <interactant intactId="EBI-7951023">
        <id>O95837</id>
    </interactant>
    <interactant intactId="EBI-742362">
        <id>O96015</id>
        <label>DNAL4</label>
    </interactant>
    <organismsDiffer>false</organismsDiffer>
    <experiments>3</experiments>
</comment>
<comment type="interaction">
    <interactant intactId="EBI-7951023">
        <id>O95837</id>
    </interactant>
    <interactant intactId="EBI-399080">
        <id>Q92993</id>
        <label>KAT5</label>
    </interactant>
    <organismsDiffer>false</organismsDiffer>
    <experiments>3</experiments>
</comment>
<comment type="interaction">
    <interactant intactId="EBI-7951023">
        <id>O95837</id>
    </interactant>
    <interactant intactId="EBI-11742507">
        <id>Q8TAP4-4</id>
        <label>LMO3</label>
    </interactant>
    <organismsDiffer>false</organismsDiffer>
    <experiments>3</experiments>
</comment>
<comment type="interaction">
    <interactant intactId="EBI-7951023">
        <id>O95837</id>
    </interactant>
    <interactant intactId="EBI-9090795">
        <id>Q15047-2</id>
        <label>SETDB1</label>
    </interactant>
    <organismsDiffer>false</organismsDiffer>
    <experiments>3</experiments>
</comment>
<comment type="interaction">
    <interactant intactId="EBI-7951023">
        <id>O95837</id>
    </interactant>
    <interactant intactId="EBI-359832">
        <id>P61981</id>
        <label>YWHAG</label>
    </interactant>
    <organismsDiffer>false</organismsDiffer>
    <experiments>3</experiments>
</comment>
<comment type="similarity">
    <text evidence="3">Belongs to the G-alpha family. G(q) subfamily.</text>
</comment>
<organism>
    <name type="scientific">Homo sapiens</name>
    <name type="common">Human</name>
    <dbReference type="NCBI Taxonomy" id="9606"/>
    <lineage>
        <taxon>Eukaryota</taxon>
        <taxon>Metazoa</taxon>
        <taxon>Chordata</taxon>
        <taxon>Craniata</taxon>
        <taxon>Vertebrata</taxon>
        <taxon>Euteleostomi</taxon>
        <taxon>Mammalia</taxon>
        <taxon>Eutheria</taxon>
        <taxon>Euarchontoglires</taxon>
        <taxon>Primates</taxon>
        <taxon>Haplorrhini</taxon>
        <taxon>Catarrhini</taxon>
        <taxon>Hominidae</taxon>
        <taxon>Homo</taxon>
    </lineage>
</organism>
<accession>O95837</accession>
<accession>B1ALW3</accession>
<proteinExistence type="evidence at protein level"/>
<evidence type="ECO:0000250" key="1"/>
<evidence type="ECO:0000255" key="2">
    <source>
        <dbReference type="PROSITE-ProRule" id="PRU01230"/>
    </source>
</evidence>
<evidence type="ECO:0000305" key="3"/>
<feature type="chain" id="PRO_0000203752" description="Guanine nucleotide-binding protein subunit alpha-14">
    <location>
        <begin position="1"/>
        <end position="355"/>
    </location>
</feature>
<feature type="domain" description="G-alpha" evidence="2">
    <location>
        <begin position="34"/>
        <end position="355"/>
    </location>
</feature>
<feature type="region of interest" description="G1 motif" evidence="2">
    <location>
        <begin position="37"/>
        <end position="50"/>
    </location>
</feature>
<feature type="region of interest" description="G2 motif" evidence="2">
    <location>
        <begin position="174"/>
        <end position="182"/>
    </location>
</feature>
<feature type="region of interest" description="G3 motif" evidence="2">
    <location>
        <begin position="197"/>
        <end position="206"/>
    </location>
</feature>
<feature type="region of interest" description="G4 motif" evidence="2">
    <location>
        <begin position="266"/>
        <end position="273"/>
    </location>
</feature>
<feature type="region of interest" description="G5 motif" evidence="2">
    <location>
        <begin position="325"/>
        <end position="330"/>
    </location>
</feature>
<feature type="binding site" evidence="1">
    <location>
        <begin position="42"/>
        <end position="49"/>
    </location>
    <ligand>
        <name>GTP</name>
        <dbReference type="ChEBI" id="CHEBI:37565"/>
    </ligand>
</feature>
<feature type="binding site" evidence="1">
    <location>
        <position position="49"/>
    </location>
    <ligand>
        <name>Mg(2+)</name>
        <dbReference type="ChEBI" id="CHEBI:18420"/>
    </ligand>
</feature>
<feature type="binding site" evidence="1">
    <location>
        <begin position="176"/>
        <end position="182"/>
    </location>
    <ligand>
        <name>GTP</name>
        <dbReference type="ChEBI" id="CHEBI:37565"/>
    </ligand>
</feature>
<feature type="binding site" evidence="1">
    <location>
        <position position="182"/>
    </location>
    <ligand>
        <name>Mg(2+)</name>
        <dbReference type="ChEBI" id="CHEBI:18420"/>
    </ligand>
</feature>
<feature type="binding site" evidence="1">
    <location>
        <begin position="201"/>
        <end position="205"/>
    </location>
    <ligand>
        <name>GTP</name>
        <dbReference type="ChEBI" id="CHEBI:37565"/>
    </ligand>
</feature>
<feature type="binding site" evidence="1">
    <location>
        <begin position="270"/>
        <end position="273"/>
    </location>
    <ligand>
        <name>GTP</name>
        <dbReference type="ChEBI" id="CHEBI:37565"/>
    </ligand>
</feature>
<feature type="binding site" evidence="1">
    <location>
        <position position="327"/>
    </location>
    <ligand>
        <name>GTP</name>
        <dbReference type="ChEBI" id="CHEBI:37565"/>
    </ligand>
</feature>
<feature type="modified residue" description="ADP-ribosylarginine; by cholera toxin" evidence="1">
    <location>
        <position position="179"/>
    </location>
</feature>